<comment type="function">
    <text evidence="5">Regulates mitogenic signal transduction by dephosphorylating both Thr and Tyr residues on MAP kinases ERK1 and ERK2.</text>
</comment>
<comment type="catalytic activity">
    <reaction evidence="4 5">
        <text>O-phospho-L-tyrosyl-[protein] + H2O = L-tyrosyl-[protein] + phosphate</text>
        <dbReference type="Rhea" id="RHEA:10684"/>
        <dbReference type="Rhea" id="RHEA-COMP:10136"/>
        <dbReference type="Rhea" id="RHEA-COMP:20101"/>
        <dbReference type="ChEBI" id="CHEBI:15377"/>
        <dbReference type="ChEBI" id="CHEBI:43474"/>
        <dbReference type="ChEBI" id="CHEBI:46858"/>
        <dbReference type="ChEBI" id="CHEBI:61978"/>
        <dbReference type="EC" id="3.1.3.48"/>
    </reaction>
</comment>
<comment type="catalytic activity">
    <reaction evidence="1">
        <text>O-phospho-L-seryl-[protein] + H2O = L-seryl-[protein] + phosphate</text>
        <dbReference type="Rhea" id="RHEA:20629"/>
        <dbReference type="Rhea" id="RHEA-COMP:9863"/>
        <dbReference type="Rhea" id="RHEA-COMP:11604"/>
        <dbReference type="ChEBI" id="CHEBI:15377"/>
        <dbReference type="ChEBI" id="CHEBI:29999"/>
        <dbReference type="ChEBI" id="CHEBI:43474"/>
        <dbReference type="ChEBI" id="CHEBI:83421"/>
        <dbReference type="EC" id="3.1.3.16"/>
    </reaction>
</comment>
<comment type="catalytic activity">
    <reaction evidence="1">
        <text>O-phospho-L-threonyl-[protein] + H2O = L-threonyl-[protein] + phosphate</text>
        <dbReference type="Rhea" id="RHEA:47004"/>
        <dbReference type="Rhea" id="RHEA-COMP:11060"/>
        <dbReference type="Rhea" id="RHEA-COMP:11605"/>
        <dbReference type="ChEBI" id="CHEBI:15377"/>
        <dbReference type="ChEBI" id="CHEBI:30013"/>
        <dbReference type="ChEBI" id="CHEBI:43474"/>
        <dbReference type="ChEBI" id="CHEBI:61977"/>
        <dbReference type="EC" id="3.1.3.16"/>
    </reaction>
</comment>
<comment type="subunit">
    <text evidence="1">Hollow spherical complex composed of 24 subunits with pseudooctahedral symmetry, has a tetramer as the basic unit.</text>
</comment>
<comment type="subcellular location">
    <subcellularLocation>
        <location evidence="1">Nucleus</location>
    </subcellularLocation>
</comment>
<comment type="tissue specificity">
    <text>Expressed at moderate levels in nearly all tissues and cells including brain, spleen, and testes with the higher expression in the heart and lung and lower expression in skeletal muscle and kidney. Undetectable in liver. Expressed in many areas of the brain with very strong expression in the hippocampus, piriform cortex, and the suprachiasmatic nucleus.</text>
</comment>
<comment type="induction">
    <text>By mitogens and by stress.</text>
</comment>
<comment type="PTM">
    <text evidence="1">Phosphorylation in the C-terminus by ERK1/2 inhibits proteasomal degradation and stabilizes the protein.</text>
</comment>
<comment type="similarity">
    <text evidence="6">Belongs to the protein-tyrosine phosphatase family. Non-receptor class dual specificity subfamily.</text>
</comment>
<dbReference type="EC" id="3.1.3.16"/>
<dbReference type="EC" id="3.1.3.48" evidence="5"/>
<dbReference type="EMBL" id="U23438">
    <property type="protein sequence ID" value="AAC52493.1"/>
    <property type="molecule type" value="mRNA"/>
</dbReference>
<dbReference type="RefSeq" id="NP_071535.1">
    <property type="nucleotide sequence ID" value="NM_022199.1"/>
</dbReference>
<dbReference type="SMR" id="Q62767"/>
<dbReference type="FunCoup" id="Q62767">
    <property type="interactions" value="394"/>
</dbReference>
<dbReference type="STRING" id="10116.ENSRNOP00000016328"/>
<dbReference type="GlyGen" id="Q62767">
    <property type="glycosylation" value="1 site"/>
</dbReference>
<dbReference type="iPTMnet" id="Q62767"/>
<dbReference type="PhosphoSitePlus" id="Q62767"/>
<dbReference type="PaxDb" id="10116-ENSRNOP00000016328"/>
<dbReference type="GeneID" id="60587"/>
<dbReference type="KEGG" id="rno:60587"/>
<dbReference type="AGR" id="RGD:620625"/>
<dbReference type="CTD" id="1846"/>
<dbReference type="RGD" id="620625">
    <property type="gene designation" value="Dusp4"/>
</dbReference>
<dbReference type="eggNOG" id="KOG1716">
    <property type="taxonomic scope" value="Eukaryota"/>
</dbReference>
<dbReference type="InParanoid" id="Q62767"/>
<dbReference type="PhylomeDB" id="Q62767"/>
<dbReference type="Reactome" id="R-RNO-112409">
    <property type="pathway name" value="RAF-independent MAPK1/3 activation"/>
</dbReference>
<dbReference type="Reactome" id="R-RNO-202670">
    <property type="pathway name" value="ERKs are inactivated"/>
</dbReference>
<dbReference type="Reactome" id="R-RNO-5675221">
    <property type="pathway name" value="Negative regulation of MAPK pathway"/>
</dbReference>
<dbReference type="PRO" id="PR:Q62767"/>
<dbReference type="Proteomes" id="UP000002494">
    <property type="component" value="Unplaced"/>
</dbReference>
<dbReference type="GO" id="GO:0005737">
    <property type="term" value="C:cytoplasm"/>
    <property type="evidence" value="ECO:0000318"/>
    <property type="project" value="GO_Central"/>
</dbReference>
<dbReference type="GO" id="GO:0005634">
    <property type="term" value="C:nucleus"/>
    <property type="evidence" value="ECO:0000250"/>
    <property type="project" value="UniProtKB"/>
</dbReference>
<dbReference type="GO" id="GO:1990439">
    <property type="term" value="F:MAP kinase serine/threonine phosphatase activity"/>
    <property type="evidence" value="ECO:0000250"/>
    <property type="project" value="UniProtKB"/>
</dbReference>
<dbReference type="GO" id="GO:0017017">
    <property type="term" value="F:MAP kinase tyrosine/serine/threonine phosphatase activity"/>
    <property type="evidence" value="ECO:0000314"/>
    <property type="project" value="RGD"/>
</dbReference>
<dbReference type="GO" id="GO:0016791">
    <property type="term" value="F:phosphatase activity"/>
    <property type="evidence" value="ECO:0000266"/>
    <property type="project" value="RGD"/>
</dbReference>
<dbReference type="GO" id="GO:0004721">
    <property type="term" value="F:phosphoprotein phosphatase activity"/>
    <property type="evidence" value="ECO:0000318"/>
    <property type="project" value="GO_Central"/>
</dbReference>
<dbReference type="GO" id="GO:0004725">
    <property type="term" value="F:protein tyrosine phosphatase activity"/>
    <property type="evidence" value="ECO:0000250"/>
    <property type="project" value="UniProtKB"/>
</dbReference>
<dbReference type="GO" id="GO:0008330">
    <property type="term" value="F:protein tyrosine/threonine phosphatase activity"/>
    <property type="evidence" value="ECO:0000266"/>
    <property type="project" value="RGD"/>
</dbReference>
<dbReference type="GO" id="GO:0001706">
    <property type="term" value="P:endoderm formation"/>
    <property type="evidence" value="ECO:0000318"/>
    <property type="project" value="GO_Central"/>
</dbReference>
<dbReference type="GO" id="GO:0070373">
    <property type="term" value="P:negative regulation of ERK1 and ERK2 cascade"/>
    <property type="evidence" value="ECO:0000250"/>
    <property type="project" value="UniProtKB"/>
</dbReference>
<dbReference type="GO" id="GO:0043409">
    <property type="term" value="P:negative regulation of MAPK cascade"/>
    <property type="evidence" value="ECO:0000318"/>
    <property type="project" value="GO_Central"/>
</dbReference>
<dbReference type="GO" id="GO:0007165">
    <property type="term" value="P:signal transduction"/>
    <property type="evidence" value="ECO:0000318"/>
    <property type="project" value="GO_Central"/>
</dbReference>
<dbReference type="CDD" id="cd14640">
    <property type="entry name" value="DSP_DUSP4"/>
    <property type="match status" value="1"/>
</dbReference>
<dbReference type="CDD" id="cd01446">
    <property type="entry name" value="DSP_MapKP"/>
    <property type="match status" value="1"/>
</dbReference>
<dbReference type="FunFam" id="3.40.250.10:FF:000027">
    <property type="entry name" value="Dual specificity phosphatase 4"/>
    <property type="match status" value="1"/>
</dbReference>
<dbReference type="FunFam" id="3.90.190.10:FF:000015">
    <property type="entry name" value="Dual specificity phosphatase 4"/>
    <property type="match status" value="1"/>
</dbReference>
<dbReference type="Gene3D" id="3.90.190.10">
    <property type="entry name" value="Protein tyrosine phosphatase superfamily"/>
    <property type="match status" value="1"/>
</dbReference>
<dbReference type="Gene3D" id="3.40.250.10">
    <property type="entry name" value="Rhodanese-like domain"/>
    <property type="match status" value="1"/>
</dbReference>
<dbReference type="InterPro" id="IPR000340">
    <property type="entry name" value="Dual-sp_phosphatase_cat-dom"/>
</dbReference>
<dbReference type="InterPro" id="IPR008343">
    <property type="entry name" value="MKP"/>
</dbReference>
<dbReference type="InterPro" id="IPR029021">
    <property type="entry name" value="Prot-tyrosine_phosphatase-like"/>
</dbReference>
<dbReference type="InterPro" id="IPR001763">
    <property type="entry name" value="Rhodanese-like_dom"/>
</dbReference>
<dbReference type="InterPro" id="IPR036873">
    <property type="entry name" value="Rhodanese-like_dom_sf"/>
</dbReference>
<dbReference type="InterPro" id="IPR016130">
    <property type="entry name" value="Tyr_Pase_AS"/>
</dbReference>
<dbReference type="InterPro" id="IPR003595">
    <property type="entry name" value="Tyr_Pase_cat"/>
</dbReference>
<dbReference type="InterPro" id="IPR000387">
    <property type="entry name" value="Tyr_Pase_dom"/>
</dbReference>
<dbReference type="InterPro" id="IPR020422">
    <property type="entry name" value="TYR_PHOSPHATASE_DUAL_dom"/>
</dbReference>
<dbReference type="PANTHER" id="PTHR10159">
    <property type="entry name" value="DUAL SPECIFICITY PROTEIN PHOSPHATASE"/>
    <property type="match status" value="1"/>
</dbReference>
<dbReference type="PANTHER" id="PTHR10159:SF111">
    <property type="entry name" value="DUAL SPECIFICITY PROTEIN PHOSPHATASE 4"/>
    <property type="match status" value="1"/>
</dbReference>
<dbReference type="Pfam" id="PF00782">
    <property type="entry name" value="DSPc"/>
    <property type="match status" value="1"/>
</dbReference>
<dbReference type="Pfam" id="PF00581">
    <property type="entry name" value="Rhodanese"/>
    <property type="match status" value="1"/>
</dbReference>
<dbReference type="PIRSF" id="PIRSF000939">
    <property type="entry name" value="MAPK_Ptase"/>
    <property type="match status" value="1"/>
</dbReference>
<dbReference type="PRINTS" id="PR01764">
    <property type="entry name" value="MAPKPHPHTASE"/>
</dbReference>
<dbReference type="SMART" id="SM00195">
    <property type="entry name" value="DSPc"/>
    <property type="match status" value="1"/>
</dbReference>
<dbReference type="SMART" id="SM00404">
    <property type="entry name" value="PTPc_motif"/>
    <property type="match status" value="1"/>
</dbReference>
<dbReference type="SMART" id="SM00450">
    <property type="entry name" value="RHOD"/>
    <property type="match status" value="1"/>
</dbReference>
<dbReference type="SUPFAM" id="SSF52799">
    <property type="entry name" value="(Phosphotyrosine protein) phosphatases II"/>
    <property type="match status" value="1"/>
</dbReference>
<dbReference type="SUPFAM" id="SSF52821">
    <property type="entry name" value="Rhodanese/Cell cycle control phosphatase"/>
    <property type="match status" value="1"/>
</dbReference>
<dbReference type="PROSITE" id="PS50206">
    <property type="entry name" value="RHODANESE_3"/>
    <property type="match status" value="1"/>
</dbReference>
<dbReference type="PROSITE" id="PS00383">
    <property type="entry name" value="TYR_PHOSPHATASE_1"/>
    <property type="match status" value="1"/>
</dbReference>
<dbReference type="PROSITE" id="PS50056">
    <property type="entry name" value="TYR_PHOSPHATASE_2"/>
    <property type="match status" value="1"/>
</dbReference>
<dbReference type="PROSITE" id="PS50054">
    <property type="entry name" value="TYR_PHOSPHATASE_DUAL"/>
    <property type="match status" value="1"/>
</dbReference>
<gene>
    <name type="primary">Dusp4</name>
    <name type="synonym">Mkp2</name>
</gene>
<organism>
    <name type="scientific">Rattus norvegicus</name>
    <name type="common">Rat</name>
    <dbReference type="NCBI Taxonomy" id="10116"/>
    <lineage>
        <taxon>Eukaryota</taxon>
        <taxon>Metazoa</taxon>
        <taxon>Chordata</taxon>
        <taxon>Craniata</taxon>
        <taxon>Vertebrata</taxon>
        <taxon>Euteleostomi</taxon>
        <taxon>Mammalia</taxon>
        <taxon>Eutheria</taxon>
        <taxon>Euarchontoglires</taxon>
        <taxon>Glires</taxon>
        <taxon>Rodentia</taxon>
        <taxon>Myomorpha</taxon>
        <taxon>Muroidea</taxon>
        <taxon>Muridae</taxon>
        <taxon>Murinae</taxon>
        <taxon>Rattus</taxon>
    </lineage>
</organism>
<reference key="1">
    <citation type="journal article" date="1995" name="J. Biol. Chem.">
        <title>A novel mitogen-activated protein kinase phosphatase. Structure, expression, and regulation.</title>
        <authorList>
            <person name="Misra-Press A."/>
            <person name="Rim C.S."/>
            <person name="Yao H."/>
            <person name="Roberson M.S."/>
            <person name="Stork P.J.S."/>
        </authorList>
    </citation>
    <scope>NUCLEOTIDE SEQUENCE [MRNA]</scope>
    <scope>CATALYTIC ACTIVITY</scope>
    <scope>FUNCTION</scope>
    <source>
        <tissue>Pheochromocytoma</tissue>
    </source>
</reference>
<sequence>MVTMEELREMDCSVLKRLMNRDENGGTAGSSGGSHGALGLLSGGKCLLLDCRPFLAHSAGYIRGSVNVRCNTIVRRRAKGSVSLEQILPAEEEVRARLRSGLYSAVIVYDERSPRAESLREDSTVSLVVQALRRNAERTDICLLKGGYERFSSEYPEFCSKTKALAAIPPPVPPSTNESLDLGCSSCGTPLHDQGGPVEILPFLYLGSAYHAARRDMLDALGITALLNVSSDCPNHFEGHYQYKCIPVEDNHKADISSWFMEAIEYIDAVKDCRGRVLVHCQAGISRSATICLAYLMMKKRVRLEEAFEFVKQRRSIISPNFSFMGQLLQFESQVLTTSCAAEAASPSGPLRERGKATPTPTSQFVFSFPVSVGVHAAPSNLPYLHSPITTSPSC</sequence>
<feature type="initiator methionine" description="Removed" evidence="1">
    <location>
        <position position="1"/>
    </location>
</feature>
<feature type="chain" id="PRO_0000094800" description="Dual specificity protein phosphatase 4">
    <location>
        <begin position="2"/>
        <end position="395"/>
    </location>
</feature>
<feature type="domain" description="Rhodanese" evidence="3">
    <location>
        <begin position="42"/>
        <end position="160"/>
    </location>
</feature>
<feature type="domain" description="Tyrosine-protein phosphatase" evidence="2">
    <location>
        <begin position="196"/>
        <end position="337"/>
    </location>
</feature>
<feature type="active site" description="Phosphocysteine intermediate" evidence="2">
    <location>
        <position position="281"/>
    </location>
</feature>
<feature type="modified residue" description="N-acetylvaline" evidence="1">
    <location>
        <position position="2"/>
    </location>
</feature>
<feature type="modified residue" description="Phosphoserine; by MAPK" evidence="1">
    <location>
        <position position="387"/>
    </location>
</feature>
<feature type="modified residue" description="Phosphoserine; by MAPK" evidence="1">
    <location>
        <position position="392"/>
    </location>
</feature>
<name>DUS4_RAT</name>
<proteinExistence type="evidence at protein level"/>
<protein>
    <recommendedName>
        <fullName>Dual specificity protein phosphatase 4</fullName>
        <ecNumber>3.1.3.16</ecNumber>
        <ecNumber evidence="5">3.1.3.48</ecNumber>
    </recommendedName>
    <alternativeName>
        <fullName>Mitogen-activated protein kinase phosphatase 2</fullName>
        <shortName>MAP kinase phosphatase 2</shortName>
        <shortName>MKP-2</shortName>
    </alternativeName>
</protein>
<keyword id="KW-0007">Acetylation</keyword>
<keyword id="KW-0378">Hydrolase</keyword>
<keyword id="KW-0539">Nucleus</keyword>
<keyword id="KW-0597">Phosphoprotein</keyword>
<keyword id="KW-0904">Protein phosphatase</keyword>
<keyword id="KW-1185">Reference proteome</keyword>
<evidence type="ECO:0000250" key="1">
    <source>
        <dbReference type="UniProtKB" id="Q13115"/>
    </source>
</evidence>
<evidence type="ECO:0000255" key="2">
    <source>
        <dbReference type="PROSITE-ProRule" id="PRU00160"/>
    </source>
</evidence>
<evidence type="ECO:0000255" key="3">
    <source>
        <dbReference type="PROSITE-ProRule" id="PRU00173"/>
    </source>
</evidence>
<evidence type="ECO:0000255" key="4">
    <source>
        <dbReference type="PROSITE-ProRule" id="PRU10044"/>
    </source>
</evidence>
<evidence type="ECO:0000269" key="5">
    <source>
    </source>
</evidence>
<evidence type="ECO:0000305" key="6"/>
<accession>Q62767</accession>